<evidence type="ECO:0000255" key="1">
    <source>
        <dbReference type="HAMAP-Rule" id="MF_01562"/>
    </source>
</evidence>
<accession>Q8CSD1</accession>
<gene>
    <name evidence="1" type="primary">floA</name>
    <name type="ordered locus">SE_1260</name>
</gene>
<name>FLOA_STAES</name>
<organism>
    <name type="scientific">Staphylococcus epidermidis (strain ATCC 12228 / FDA PCI 1200)</name>
    <dbReference type="NCBI Taxonomy" id="176280"/>
    <lineage>
        <taxon>Bacteria</taxon>
        <taxon>Bacillati</taxon>
        <taxon>Bacillota</taxon>
        <taxon>Bacilli</taxon>
        <taxon>Bacillales</taxon>
        <taxon>Staphylococcaceae</taxon>
        <taxon>Staphylococcus</taxon>
    </lineage>
</organism>
<reference key="1">
    <citation type="journal article" date="2003" name="Mol. Microbiol.">
        <title>Genome-based analysis of virulence genes in a non-biofilm-forming Staphylococcus epidermidis strain (ATCC 12228).</title>
        <authorList>
            <person name="Zhang Y.-Q."/>
            <person name="Ren S.-X."/>
            <person name="Li H.-L."/>
            <person name="Wang Y.-X."/>
            <person name="Fu G."/>
            <person name="Yang J."/>
            <person name="Qin Z.-Q."/>
            <person name="Miao Y.-G."/>
            <person name="Wang W.-Y."/>
            <person name="Chen R.-S."/>
            <person name="Shen Y."/>
            <person name="Chen Z."/>
            <person name="Yuan Z.-H."/>
            <person name="Zhao G.-P."/>
            <person name="Qu D."/>
            <person name="Danchin A."/>
            <person name="Wen Y.-M."/>
        </authorList>
    </citation>
    <scope>NUCLEOTIDE SEQUENCE [LARGE SCALE GENOMIC DNA]</scope>
    <source>
        <strain>ATCC 12228 / FDA PCI 1200</strain>
    </source>
</reference>
<dbReference type="EMBL" id="AE015929">
    <property type="protein sequence ID" value="AAO04859.1"/>
    <property type="molecule type" value="Genomic_DNA"/>
</dbReference>
<dbReference type="RefSeq" id="NP_764815.1">
    <property type="nucleotide sequence ID" value="NC_004461.1"/>
</dbReference>
<dbReference type="RefSeq" id="WP_001830989.1">
    <property type="nucleotide sequence ID" value="NZ_WBME01000008.1"/>
</dbReference>
<dbReference type="SMR" id="Q8CSD1"/>
<dbReference type="GeneID" id="50018624"/>
<dbReference type="KEGG" id="sep:SE_1260"/>
<dbReference type="PATRIC" id="fig|176280.10.peg.1228"/>
<dbReference type="eggNOG" id="COG4864">
    <property type="taxonomic scope" value="Bacteria"/>
</dbReference>
<dbReference type="HOGENOM" id="CLU_836378_0_0_9"/>
<dbReference type="OrthoDB" id="9808365at2"/>
<dbReference type="Proteomes" id="UP000001411">
    <property type="component" value="Chromosome"/>
</dbReference>
<dbReference type="GO" id="GO:0045121">
    <property type="term" value="C:membrane raft"/>
    <property type="evidence" value="ECO:0007669"/>
    <property type="project" value="UniProtKB-SubCell"/>
</dbReference>
<dbReference type="GO" id="GO:0005886">
    <property type="term" value="C:plasma membrane"/>
    <property type="evidence" value="ECO:0007669"/>
    <property type="project" value="UniProtKB-SubCell"/>
</dbReference>
<dbReference type="HAMAP" id="MF_01562">
    <property type="entry name" value="FloA"/>
    <property type="match status" value="1"/>
</dbReference>
<dbReference type="InterPro" id="IPR022853">
    <property type="entry name" value="FloA"/>
</dbReference>
<dbReference type="NCBIfam" id="NF010186">
    <property type="entry name" value="PRK13665.1"/>
    <property type="match status" value="1"/>
</dbReference>
<dbReference type="Pfam" id="PF12127">
    <property type="entry name" value="FloA"/>
    <property type="match status" value="1"/>
</dbReference>
<proteinExistence type="inferred from homology"/>
<feature type="chain" id="PRO_0000232566" description="Flotillin-like protein FloA">
    <location>
        <begin position="1"/>
        <end position="329"/>
    </location>
</feature>
<feature type="transmembrane region" description="Helical" evidence="1">
    <location>
        <begin position="4"/>
        <end position="24"/>
    </location>
</feature>
<feature type="transmembrane region" description="Helical" evidence="1">
    <location>
        <begin position="26"/>
        <end position="46"/>
    </location>
</feature>
<comment type="function">
    <text evidence="1">Found in functional membrane microdomains (FMM) that may be equivalent to eukaryotic membrane rafts. FMMs are highly dynamic and increase in number as cells age. Flotillins are thought to be important factors in membrane fluidity.</text>
</comment>
<comment type="subunit">
    <text evidence="1">Homooligomerizes.</text>
</comment>
<comment type="subcellular location">
    <subcellularLocation>
        <location evidence="1">Cell membrane</location>
        <topology evidence="1">Multi-pass membrane protein</topology>
    </subcellularLocation>
    <subcellularLocation>
        <location evidence="1">Membrane raft</location>
        <topology evidence="1">Multi-pass membrane protein</topology>
    </subcellularLocation>
</comment>
<comment type="similarity">
    <text evidence="1">Belongs to the flotillin-like FloA family.</text>
</comment>
<protein>
    <recommendedName>
        <fullName evidence="1">Flotillin-like protein FloA</fullName>
    </recommendedName>
</protein>
<sequence length="329" mass="35173">MFSIGFIIIAVIIVVALLILFSFVPVGLWISALAAGVHVGIGTLVGMRLRRVSPRKVIAPLIKAHKAGLNLTTNQLESHYLAGGNVDRVVDANIAAQRADIDLPFERGAAIDLAGRDVLEAVQMSVNPKVIETPFIAGVAMNGIEVKAKARITVRANIARLVGGAGEETIIARVGEGIVSTIGSSEHHTEVLENPDNISKTVLSKGLDSGTAFEILSIDIADVDISKNIGADLQTEQALADKNIAQAKAEERRAMAVASEQEMKARVQEMRAKVVEAESEVPLAMAEALRSGNIGVKDYYNLKNIEADTGMRNAINKRTDQNDDESPQQ</sequence>
<keyword id="KW-1003">Cell membrane</keyword>
<keyword id="KW-0472">Membrane</keyword>
<keyword id="KW-0812">Transmembrane</keyword>
<keyword id="KW-1133">Transmembrane helix</keyword>